<sequence>MEAFDTHTGIGVPLRRSNVDTDQIIPAVFLKRVTRTGFEDGLFASWRSDPSFVLNLSPFDRGSVLVAGPDFGTGSSREHAVWALMDYGFRVVISSRFGDIFRGNAGKAGLLAAEVDQDGVELLWKLIEQSPGLEITVNLQDRNVIAGTVVLPFRIDDHTAWRLLEGLDDIALTLRKLDEIEAYEAAYPAWKPRTLPTS</sequence>
<reference key="1">
    <citation type="journal article" date="2008" name="Genome Res.">
        <title>Insights from the complete genome sequence of Mycobacterium marinum on the evolution of Mycobacterium tuberculosis.</title>
        <authorList>
            <person name="Stinear T.P."/>
            <person name="Seemann T."/>
            <person name="Harrison P.F."/>
            <person name="Jenkin G.A."/>
            <person name="Davies J.K."/>
            <person name="Johnson P.D."/>
            <person name="Abdellah Z."/>
            <person name="Arrowsmith C."/>
            <person name="Chillingworth T."/>
            <person name="Churcher C."/>
            <person name="Clarke K."/>
            <person name="Cronin A."/>
            <person name="Davis P."/>
            <person name="Goodhead I."/>
            <person name="Holroyd N."/>
            <person name="Jagels K."/>
            <person name="Lord A."/>
            <person name="Moule S."/>
            <person name="Mungall K."/>
            <person name="Norbertczak H."/>
            <person name="Quail M.A."/>
            <person name="Rabbinowitsch E."/>
            <person name="Walker D."/>
            <person name="White B."/>
            <person name="Whitehead S."/>
            <person name="Small P.L."/>
            <person name="Brosch R."/>
            <person name="Ramakrishnan L."/>
            <person name="Fischbach M.A."/>
            <person name="Parkhill J."/>
            <person name="Cole S.T."/>
        </authorList>
    </citation>
    <scope>NUCLEOTIDE SEQUENCE [LARGE SCALE GENOMIC DNA]</scope>
    <source>
        <strain>ATCC BAA-535 / M</strain>
    </source>
</reference>
<keyword id="KW-0028">Amino-acid biosynthesis</keyword>
<keyword id="KW-0100">Branched-chain amino acid biosynthesis</keyword>
<keyword id="KW-0432">Leucine biosynthesis</keyword>
<keyword id="KW-0456">Lyase</keyword>
<keyword id="KW-1185">Reference proteome</keyword>
<proteinExistence type="inferred from homology"/>
<comment type="function">
    <text evidence="1">Catalyzes the isomerization between 2-isopropylmalate and 3-isopropylmalate, via the formation of 2-isopropylmaleate.</text>
</comment>
<comment type="catalytic activity">
    <reaction evidence="1">
        <text>(2R,3S)-3-isopropylmalate = (2S)-2-isopropylmalate</text>
        <dbReference type="Rhea" id="RHEA:32287"/>
        <dbReference type="ChEBI" id="CHEBI:1178"/>
        <dbReference type="ChEBI" id="CHEBI:35121"/>
        <dbReference type="EC" id="4.2.1.33"/>
    </reaction>
</comment>
<comment type="pathway">
    <text evidence="1">Amino-acid biosynthesis; L-leucine biosynthesis; L-leucine from 3-methyl-2-oxobutanoate: step 2/4.</text>
</comment>
<comment type="subunit">
    <text evidence="1">Heterodimer of LeuC and LeuD.</text>
</comment>
<comment type="similarity">
    <text evidence="1">Belongs to the LeuD family. LeuD type 1 subfamily.</text>
</comment>
<evidence type="ECO:0000255" key="1">
    <source>
        <dbReference type="HAMAP-Rule" id="MF_01031"/>
    </source>
</evidence>
<gene>
    <name evidence="1" type="primary">leuD</name>
    <name type="ordered locus">MMAR_1727</name>
</gene>
<dbReference type="EC" id="4.2.1.33" evidence="1"/>
<dbReference type="EMBL" id="CP000854">
    <property type="protein sequence ID" value="ACC40176.1"/>
    <property type="molecule type" value="Genomic_DNA"/>
</dbReference>
<dbReference type="RefSeq" id="WP_011740035.1">
    <property type="nucleotide sequence ID" value="NC_010612.1"/>
</dbReference>
<dbReference type="SMR" id="B2HII2"/>
<dbReference type="STRING" id="216594.MMAR_1727"/>
<dbReference type="KEGG" id="mmi:MMAR_1727"/>
<dbReference type="eggNOG" id="COG0066">
    <property type="taxonomic scope" value="Bacteria"/>
</dbReference>
<dbReference type="HOGENOM" id="CLU_081378_0_1_11"/>
<dbReference type="OrthoDB" id="9777465at2"/>
<dbReference type="UniPathway" id="UPA00048">
    <property type="reaction ID" value="UER00071"/>
</dbReference>
<dbReference type="Proteomes" id="UP000001190">
    <property type="component" value="Chromosome"/>
</dbReference>
<dbReference type="GO" id="GO:0009316">
    <property type="term" value="C:3-isopropylmalate dehydratase complex"/>
    <property type="evidence" value="ECO:0007669"/>
    <property type="project" value="InterPro"/>
</dbReference>
<dbReference type="GO" id="GO:0003861">
    <property type="term" value="F:3-isopropylmalate dehydratase activity"/>
    <property type="evidence" value="ECO:0007669"/>
    <property type="project" value="UniProtKB-UniRule"/>
</dbReference>
<dbReference type="GO" id="GO:0009098">
    <property type="term" value="P:L-leucine biosynthetic process"/>
    <property type="evidence" value="ECO:0007669"/>
    <property type="project" value="UniProtKB-UniRule"/>
</dbReference>
<dbReference type="CDD" id="cd01577">
    <property type="entry name" value="IPMI_Swivel"/>
    <property type="match status" value="1"/>
</dbReference>
<dbReference type="FunFam" id="3.20.19.10:FF:000003">
    <property type="entry name" value="3-isopropylmalate dehydratase small subunit"/>
    <property type="match status" value="1"/>
</dbReference>
<dbReference type="Gene3D" id="3.20.19.10">
    <property type="entry name" value="Aconitase, domain 4"/>
    <property type="match status" value="1"/>
</dbReference>
<dbReference type="HAMAP" id="MF_01031">
    <property type="entry name" value="LeuD_type1"/>
    <property type="match status" value="1"/>
</dbReference>
<dbReference type="InterPro" id="IPR004431">
    <property type="entry name" value="3-IsopropMal_deHydase_ssu"/>
</dbReference>
<dbReference type="InterPro" id="IPR015928">
    <property type="entry name" value="Aconitase/3IPM_dehydase_swvl"/>
</dbReference>
<dbReference type="InterPro" id="IPR000573">
    <property type="entry name" value="AconitaseA/IPMdHydase_ssu_swvl"/>
</dbReference>
<dbReference type="InterPro" id="IPR033940">
    <property type="entry name" value="IPMI_Swivel"/>
</dbReference>
<dbReference type="InterPro" id="IPR050075">
    <property type="entry name" value="LeuD"/>
</dbReference>
<dbReference type="NCBIfam" id="TIGR00171">
    <property type="entry name" value="leuD"/>
    <property type="match status" value="1"/>
</dbReference>
<dbReference type="NCBIfam" id="NF002458">
    <property type="entry name" value="PRK01641.1"/>
    <property type="match status" value="1"/>
</dbReference>
<dbReference type="PANTHER" id="PTHR43345:SF5">
    <property type="entry name" value="3-ISOPROPYLMALATE DEHYDRATASE SMALL SUBUNIT"/>
    <property type="match status" value="1"/>
</dbReference>
<dbReference type="PANTHER" id="PTHR43345">
    <property type="entry name" value="3-ISOPROPYLMALATE DEHYDRATASE SMALL SUBUNIT 2-RELATED-RELATED"/>
    <property type="match status" value="1"/>
</dbReference>
<dbReference type="Pfam" id="PF00694">
    <property type="entry name" value="Aconitase_C"/>
    <property type="match status" value="1"/>
</dbReference>
<dbReference type="SUPFAM" id="SSF52016">
    <property type="entry name" value="LeuD/IlvD-like"/>
    <property type="match status" value="1"/>
</dbReference>
<name>LEUD_MYCMM</name>
<accession>B2HII2</accession>
<feature type="chain" id="PRO_1000135820" description="3-isopropylmalate dehydratase small subunit">
    <location>
        <begin position="1"/>
        <end position="198"/>
    </location>
</feature>
<organism>
    <name type="scientific">Mycobacterium marinum (strain ATCC BAA-535 / M)</name>
    <dbReference type="NCBI Taxonomy" id="216594"/>
    <lineage>
        <taxon>Bacteria</taxon>
        <taxon>Bacillati</taxon>
        <taxon>Actinomycetota</taxon>
        <taxon>Actinomycetes</taxon>
        <taxon>Mycobacteriales</taxon>
        <taxon>Mycobacteriaceae</taxon>
        <taxon>Mycobacterium</taxon>
        <taxon>Mycobacterium ulcerans group</taxon>
    </lineage>
</organism>
<protein>
    <recommendedName>
        <fullName evidence="1">3-isopropylmalate dehydratase small subunit</fullName>
        <ecNumber evidence="1">4.2.1.33</ecNumber>
    </recommendedName>
    <alternativeName>
        <fullName evidence="1">Alpha-IPM isomerase</fullName>
        <shortName evidence="1">IPMI</shortName>
    </alternativeName>
    <alternativeName>
        <fullName evidence="1">Isopropylmalate isomerase</fullName>
    </alternativeName>
</protein>